<feature type="chain" id="PRO_0000181790" description="tRNA(Ile)-lysidine synthase">
    <location>
        <begin position="1"/>
        <end position="330"/>
    </location>
</feature>
<feature type="binding site" evidence="1">
    <location>
        <begin position="31"/>
        <end position="36"/>
    </location>
    <ligand>
        <name>ATP</name>
        <dbReference type="ChEBI" id="CHEBI:30616"/>
    </ligand>
</feature>
<keyword id="KW-0067">ATP-binding</keyword>
<keyword id="KW-0963">Cytoplasm</keyword>
<keyword id="KW-0436">Ligase</keyword>
<keyword id="KW-0547">Nucleotide-binding</keyword>
<keyword id="KW-1185">Reference proteome</keyword>
<keyword id="KW-0819">tRNA processing</keyword>
<evidence type="ECO:0000255" key="1">
    <source>
        <dbReference type="HAMAP-Rule" id="MF_01161"/>
    </source>
</evidence>
<protein>
    <recommendedName>
        <fullName evidence="1">tRNA(Ile)-lysidine synthase</fullName>
        <ecNumber evidence="1">6.3.4.19</ecNumber>
    </recommendedName>
    <alternativeName>
        <fullName evidence="1">tRNA(Ile)-2-lysyl-cytidine synthase</fullName>
    </alternativeName>
    <alternativeName>
        <fullName evidence="1">tRNA(Ile)-lysidine synthetase</fullName>
    </alternativeName>
</protein>
<dbReference type="EC" id="6.3.4.19" evidence="1"/>
<dbReference type="EMBL" id="BA000022">
    <property type="protein sequence ID" value="BAA18281.1"/>
    <property type="molecule type" value="Genomic_DNA"/>
</dbReference>
<dbReference type="PIR" id="S75822">
    <property type="entry name" value="S75822"/>
</dbReference>
<dbReference type="SMR" id="P74192"/>
<dbReference type="FunCoup" id="P74192">
    <property type="interactions" value="130"/>
</dbReference>
<dbReference type="IntAct" id="P74192">
    <property type="interactions" value="3"/>
</dbReference>
<dbReference type="STRING" id="1148.gene:10499157"/>
<dbReference type="PaxDb" id="1148-1653367"/>
<dbReference type="EnsemblBacteria" id="BAA18281">
    <property type="protein sequence ID" value="BAA18281"/>
    <property type="gene ID" value="BAA18281"/>
</dbReference>
<dbReference type="KEGG" id="syn:slr1278"/>
<dbReference type="eggNOG" id="COG0037">
    <property type="taxonomic scope" value="Bacteria"/>
</dbReference>
<dbReference type="InParanoid" id="P74192"/>
<dbReference type="PhylomeDB" id="P74192"/>
<dbReference type="Proteomes" id="UP000001425">
    <property type="component" value="Chromosome"/>
</dbReference>
<dbReference type="GO" id="GO:0005737">
    <property type="term" value="C:cytoplasm"/>
    <property type="evidence" value="ECO:0007669"/>
    <property type="project" value="UniProtKB-SubCell"/>
</dbReference>
<dbReference type="GO" id="GO:0005524">
    <property type="term" value="F:ATP binding"/>
    <property type="evidence" value="ECO:0007669"/>
    <property type="project" value="UniProtKB-UniRule"/>
</dbReference>
<dbReference type="GO" id="GO:0032267">
    <property type="term" value="F:tRNA(Ile)-lysidine synthase activity"/>
    <property type="evidence" value="ECO:0007669"/>
    <property type="project" value="UniProtKB-EC"/>
</dbReference>
<dbReference type="GO" id="GO:0006400">
    <property type="term" value="P:tRNA modification"/>
    <property type="evidence" value="ECO:0007669"/>
    <property type="project" value="UniProtKB-UniRule"/>
</dbReference>
<dbReference type="CDD" id="cd01992">
    <property type="entry name" value="TilS_N"/>
    <property type="match status" value="1"/>
</dbReference>
<dbReference type="Gene3D" id="1.20.59.20">
    <property type="match status" value="1"/>
</dbReference>
<dbReference type="Gene3D" id="3.40.50.620">
    <property type="entry name" value="HUPs"/>
    <property type="match status" value="1"/>
</dbReference>
<dbReference type="HAMAP" id="MF_01161">
    <property type="entry name" value="tRNA_Ile_lys_synt"/>
    <property type="match status" value="1"/>
</dbReference>
<dbReference type="InterPro" id="IPR014729">
    <property type="entry name" value="Rossmann-like_a/b/a_fold"/>
</dbReference>
<dbReference type="InterPro" id="IPR011063">
    <property type="entry name" value="TilS/TtcA_N"/>
</dbReference>
<dbReference type="InterPro" id="IPR012094">
    <property type="entry name" value="tRNA_Ile_lys_synt"/>
</dbReference>
<dbReference type="InterPro" id="IPR012795">
    <property type="entry name" value="tRNA_Ile_lys_synt_N"/>
</dbReference>
<dbReference type="InterPro" id="IPR015262">
    <property type="entry name" value="tRNA_Ile_lys_synt_subst-bd"/>
</dbReference>
<dbReference type="NCBIfam" id="TIGR02432">
    <property type="entry name" value="lysidine_TilS_N"/>
    <property type="match status" value="1"/>
</dbReference>
<dbReference type="PANTHER" id="PTHR43033">
    <property type="entry name" value="TRNA(ILE)-LYSIDINE SYNTHASE-RELATED"/>
    <property type="match status" value="1"/>
</dbReference>
<dbReference type="PANTHER" id="PTHR43033:SF1">
    <property type="entry name" value="TRNA(ILE)-LYSIDINE SYNTHASE-RELATED"/>
    <property type="match status" value="1"/>
</dbReference>
<dbReference type="Pfam" id="PF01171">
    <property type="entry name" value="ATP_bind_3"/>
    <property type="match status" value="1"/>
</dbReference>
<dbReference type="Pfam" id="PF09179">
    <property type="entry name" value="TilS"/>
    <property type="match status" value="1"/>
</dbReference>
<dbReference type="SUPFAM" id="SSF52402">
    <property type="entry name" value="Adenine nucleotide alpha hydrolases-like"/>
    <property type="match status" value="1"/>
</dbReference>
<dbReference type="SUPFAM" id="SSF82829">
    <property type="entry name" value="MesJ substrate recognition domain-like"/>
    <property type="match status" value="1"/>
</dbReference>
<comment type="function">
    <text evidence="1">Ligates lysine onto the cytidine present at position 34 of the AUA codon-specific tRNA(Ile) that contains the anticodon CAU, in an ATP-dependent manner. Cytidine is converted to lysidine, thus changing the amino acid specificity of the tRNA from methionine to isoleucine.</text>
</comment>
<comment type="catalytic activity">
    <reaction evidence="1">
        <text>cytidine(34) in tRNA(Ile2) + L-lysine + ATP = lysidine(34) in tRNA(Ile2) + AMP + diphosphate + H(+)</text>
        <dbReference type="Rhea" id="RHEA:43744"/>
        <dbReference type="Rhea" id="RHEA-COMP:10625"/>
        <dbReference type="Rhea" id="RHEA-COMP:10670"/>
        <dbReference type="ChEBI" id="CHEBI:15378"/>
        <dbReference type="ChEBI" id="CHEBI:30616"/>
        <dbReference type="ChEBI" id="CHEBI:32551"/>
        <dbReference type="ChEBI" id="CHEBI:33019"/>
        <dbReference type="ChEBI" id="CHEBI:82748"/>
        <dbReference type="ChEBI" id="CHEBI:83665"/>
        <dbReference type="ChEBI" id="CHEBI:456215"/>
        <dbReference type="EC" id="6.3.4.19"/>
    </reaction>
</comment>
<comment type="subcellular location">
    <subcellularLocation>
        <location evidence="1">Cytoplasm</location>
    </subcellularLocation>
</comment>
<comment type="domain">
    <text>The N-terminal region contains the highly conserved SGGXDS motif, predicted to be a P-loop motif involved in ATP binding.</text>
</comment>
<comment type="similarity">
    <text evidence="1">Belongs to the tRNA(Ile)-lysidine synthase family.</text>
</comment>
<reference key="1">
    <citation type="journal article" date="1996" name="DNA Res.">
        <title>Sequence analysis of the genome of the unicellular cyanobacterium Synechocystis sp. strain PCC6803. II. Sequence determination of the entire genome and assignment of potential protein-coding regions.</title>
        <authorList>
            <person name="Kaneko T."/>
            <person name="Sato S."/>
            <person name="Kotani H."/>
            <person name="Tanaka A."/>
            <person name="Asamizu E."/>
            <person name="Nakamura Y."/>
            <person name="Miyajima N."/>
            <person name="Hirosawa M."/>
            <person name="Sugiura M."/>
            <person name="Sasamoto S."/>
            <person name="Kimura T."/>
            <person name="Hosouchi T."/>
            <person name="Matsuno A."/>
            <person name="Muraki A."/>
            <person name="Nakazaki N."/>
            <person name="Naruo K."/>
            <person name="Okumura S."/>
            <person name="Shimpo S."/>
            <person name="Takeuchi C."/>
            <person name="Wada T."/>
            <person name="Watanabe A."/>
            <person name="Yamada M."/>
            <person name="Yasuda M."/>
            <person name="Tabata S."/>
        </authorList>
    </citation>
    <scope>NUCLEOTIDE SEQUENCE [LARGE SCALE GENOMIC DNA]</scope>
    <source>
        <strain>ATCC 27184 / PCC 6803 / Kazusa</strain>
    </source>
</reference>
<name>TILS_SYNY3</name>
<accession>P74192</accession>
<gene>
    <name evidence="1" type="primary">tilS</name>
    <name type="ordered locus">slr1278</name>
</gene>
<proteinExistence type="inferred from homology"/>
<sequence length="330" mass="37771">MAWTLLHSKLHQNLQRRFPELQGTRILVAVSGGQDSLCLLHLLNDLTKQWQWHLAVAHCDHRWPTDAGIADHVQGLAQGYKLPYFQRDAQDLPQTEAAARHWRYHALTAIAKAENFPVVMTGHTQSDRAETLLFNLVRGSGSDGLQAMNWVRNLEESGSDKSPIRLIRPLLEISRQETGDFCQQQQLSVWEDVLNEKLTYRRNRIRGELIPYLKKHFNPQVEKSLAQTVELLTAEVAYLEQVSGEIYQTLSQTDQKSLNCRLLSQKPLALQRRIIRQFLQSCQSQSPNFEEIEQIVGLINAPNRSQTSSLPGQGIVRVEGDFLRYIYQGK</sequence>
<organism>
    <name type="scientific">Synechocystis sp. (strain ATCC 27184 / PCC 6803 / Kazusa)</name>
    <dbReference type="NCBI Taxonomy" id="1111708"/>
    <lineage>
        <taxon>Bacteria</taxon>
        <taxon>Bacillati</taxon>
        <taxon>Cyanobacteriota</taxon>
        <taxon>Cyanophyceae</taxon>
        <taxon>Synechococcales</taxon>
        <taxon>Merismopediaceae</taxon>
        <taxon>Synechocystis</taxon>
    </lineage>
</organism>